<organism>
    <name type="scientific">Brucella melitensis biotype 1 (strain ATCC 23456 / CCUG 17765 / NCTC 10094 / 16M)</name>
    <dbReference type="NCBI Taxonomy" id="224914"/>
    <lineage>
        <taxon>Bacteria</taxon>
        <taxon>Pseudomonadati</taxon>
        <taxon>Pseudomonadota</taxon>
        <taxon>Alphaproteobacteria</taxon>
        <taxon>Hyphomicrobiales</taxon>
        <taxon>Brucellaceae</taxon>
        <taxon>Brucella/Ochrobactrum group</taxon>
        <taxon>Brucella</taxon>
    </lineage>
</organism>
<proteinExistence type="inferred from homology"/>
<accession>Q8YHM2</accession>
<dbReference type="EMBL" id="AE008917">
    <property type="protein sequence ID" value="AAL51956.1"/>
    <property type="molecule type" value="Genomic_DNA"/>
</dbReference>
<dbReference type="PIR" id="AI3348">
    <property type="entry name" value="AI3348"/>
</dbReference>
<dbReference type="RefSeq" id="WP_002967737.1">
    <property type="nucleotide sequence ID" value="NZ_GG703780.1"/>
</dbReference>
<dbReference type="SMR" id="Q8YHM2"/>
<dbReference type="GeneID" id="97533542"/>
<dbReference type="KEGG" id="bme:BMEI0775"/>
<dbReference type="KEGG" id="bmel:DK63_647"/>
<dbReference type="PATRIC" id="fig|224914.52.peg.678"/>
<dbReference type="eggNOG" id="COG1841">
    <property type="taxonomic scope" value="Bacteria"/>
</dbReference>
<dbReference type="Proteomes" id="UP000000419">
    <property type="component" value="Chromosome I"/>
</dbReference>
<dbReference type="GO" id="GO:0022625">
    <property type="term" value="C:cytosolic large ribosomal subunit"/>
    <property type="evidence" value="ECO:0007669"/>
    <property type="project" value="TreeGrafter"/>
</dbReference>
<dbReference type="GO" id="GO:0003735">
    <property type="term" value="F:structural constituent of ribosome"/>
    <property type="evidence" value="ECO:0007669"/>
    <property type="project" value="InterPro"/>
</dbReference>
<dbReference type="GO" id="GO:0006412">
    <property type="term" value="P:translation"/>
    <property type="evidence" value="ECO:0007669"/>
    <property type="project" value="UniProtKB-UniRule"/>
</dbReference>
<dbReference type="CDD" id="cd01658">
    <property type="entry name" value="Ribosomal_L30"/>
    <property type="match status" value="1"/>
</dbReference>
<dbReference type="Gene3D" id="3.30.1390.20">
    <property type="entry name" value="Ribosomal protein L30, ferredoxin-like fold domain"/>
    <property type="match status" value="1"/>
</dbReference>
<dbReference type="HAMAP" id="MF_01371_B">
    <property type="entry name" value="Ribosomal_uL30_B"/>
    <property type="match status" value="1"/>
</dbReference>
<dbReference type="InterPro" id="IPR036919">
    <property type="entry name" value="Ribo_uL30_ferredoxin-like_sf"/>
</dbReference>
<dbReference type="InterPro" id="IPR005996">
    <property type="entry name" value="Ribosomal_uL30_bac-type"/>
</dbReference>
<dbReference type="InterPro" id="IPR016082">
    <property type="entry name" value="Ribosomal_uL30_ferredoxin-like"/>
</dbReference>
<dbReference type="NCBIfam" id="TIGR01308">
    <property type="entry name" value="rpmD_bact"/>
    <property type="match status" value="1"/>
</dbReference>
<dbReference type="PANTHER" id="PTHR15892:SF2">
    <property type="entry name" value="LARGE RIBOSOMAL SUBUNIT PROTEIN UL30M"/>
    <property type="match status" value="1"/>
</dbReference>
<dbReference type="PANTHER" id="PTHR15892">
    <property type="entry name" value="MITOCHONDRIAL RIBOSOMAL PROTEIN L30"/>
    <property type="match status" value="1"/>
</dbReference>
<dbReference type="Pfam" id="PF00327">
    <property type="entry name" value="Ribosomal_L30"/>
    <property type="match status" value="1"/>
</dbReference>
<dbReference type="PIRSF" id="PIRSF002211">
    <property type="entry name" value="Ribosomal_L30_bac-type"/>
    <property type="match status" value="1"/>
</dbReference>
<dbReference type="SUPFAM" id="SSF55129">
    <property type="entry name" value="Ribosomal protein L30p/L7e"/>
    <property type="match status" value="1"/>
</dbReference>
<sequence length="65" mass="7172">MAEKKGKTVTVEQIGSPIRRPAEQRATLIGLGLNKMHRRSTLEDTPAVRGMIAKLPHLVRVVDEA</sequence>
<keyword id="KW-0687">Ribonucleoprotein</keyword>
<keyword id="KW-0689">Ribosomal protein</keyword>
<name>RL30_BRUME</name>
<gene>
    <name evidence="1" type="primary">rpmD</name>
    <name type="ordered locus">BMEI0775</name>
</gene>
<evidence type="ECO:0000255" key="1">
    <source>
        <dbReference type="HAMAP-Rule" id="MF_01371"/>
    </source>
</evidence>
<evidence type="ECO:0000305" key="2"/>
<feature type="chain" id="PRO_0000347085" description="Large ribosomal subunit protein uL30">
    <location>
        <begin position="1"/>
        <end position="65"/>
    </location>
</feature>
<comment type="subunit">
    <text evidence="1">Part of the 50S ribosomal subunit.</text>
</comment>
<comment type="similarity">
    <text evidence="1">Belongs to the universal ribosomal protein uL30 family.</text>
</comment>
<reference key="1">
    <citation type="journal article" date="2002" name="Proc. Natl. Acad. Sci. U.S.A.">
        <title>The genome sequence of the facultative intracellular pathogen Brucella melitensis.</title>
        <authorList>
            <person name="DelVecchio V.G."/>
            <person name="Kapatral V."/>
            <person name="Redkar R.J."/>
            <person name="Patra G."/>
            <person name="Mujer C."/>
            <person name="Los T."/>
            <person name="Ivanova N."/>
            <person name="Anderson I."/>
            <person name="Bhattacharyya A."/>
            <person name="Lykidis A."/>
            <person name="Reznik G."/>
            <person name="Jablonski L."/>
            <person name="Larsen N."/>
            <person name="D'Souza M."/>
            <person name="Bernal A."/>
            <person name="Mazur M."/>
            <person name="Goltsman E."/>
            <person name="Selkov E."/>
            <person name="Elzer P.H."/>
            <person name="Hagius S."/>
            <person name="O'Callaghan D."/>
            <person name="Letesson J.-J."/>
            <person name="Haselkorn R."/>
            <person name="Kyrpides N.C."/>
            <person name="Overbeek R."/>
        </authorList>
    </citation>
    <scope>NUCLEOTIDE SEQUENCE [LARGE SCALE GENOMIC DNA]</scope>
    <source>
        <strain>ATCC 23456 / CCUG 17765 / NCTC 10094 / 16M</strain>
    </source>
</reference>
<protein>
    <recommendedName>
        <fullName evidence="1">Large ribosomal subunit protein uL30</fullName>
    </recommendedName>
    <alternativeName>
        <fullName evidence="2">50S ribosomal protein L30</fullName>
    </alternativeName>
</protein>